<sequence>MNTDDFDYELDEKFIAQTPLDKRDESKLMVMDRFNGNTEIKKFYNIIDYLNPGDVLVCNNTRVIPARLFGHRPEKEEKIEVLLLQQTEDKWECLVKPGKKMKLNQVIEFSDSVSAKVVDITEDGSRILKFEYEGIFEERLDELGNMPLPPYIKEKLNDKERYQTVYSKHNGSAAAPTAGLHFTNELLEKIKDKGIYVVFLTLHVGLGTFRPVKVDDVKDHHMHSEYYTISQETVDIINRQKSKGHNIIAVGTTSVRTLETVTHNNNSKLVAESGWTDIFIYPGFEFNIVDSLITNFHLPKSTLMMLVSAFSKKEYIFDAYEKAKQNDFRFFSFGDAMFINGGRNV</sequence>
<feature type="chain" id="PRO_1000094777" description="S-adenosylmethionine:tRNA ribosyltransferase-isomerase">
    <location>
        <begin position="1"/>
        <end position="345"/>
    </location>
</feature>
<organism>
    <name type="scientific">Finegoldia magna (strain ATCC 29328 / DSM 20472 / WAL 2508)</name>
    <name type="common">Peptostreptococcus magnus</name>
    <dbReference type="NCBI Taxonomy" id="334413"/>
    <lineage>
        <taxon>Bacteria</taxon>
        <taxon>Bacillati</taxon>
        <taxon>Bacillota</taxon>
        <taxon>Tissierellia</taxon>
        <taxon>Tissierellales</taxon>
        <taxon>Peptoniphilaceae</taxon>
        <taxon>Finegoldia</taxon>
    </lineage>
</organism>
<name>QUEA_FINM2</name>
<proteinExistence type="inferred from homology"/>
<gene>
    <name evidence="1" type="primary">queA</name>
    <name type="ordered locus">FMG_0814</name>
</gene>
<comment type="function">
    <text evidence="1">Transfers and isomerizes the ribose moiety from AdoMet to the 7-aminomethyl group of 7-deazaguanine (preQ1-tRNA) to give epoxyqueuosine (oQ-tRNA).</text>
</comment>
<comment type="catalytic activity">
    <reaction evidence="1">
        <text>7-aminomethyl-7-carbaguanosine(34) in tRNA + S-adenosyl-L-methionine = epoxyqueuosine(34) in tRNA + adenine + L-methionine + 2 H(+)</text>
        <dbReference type="Rhea" id="RHEA:32155"/>
        <dbReference type="Rhea" id="RHEA-COMP:10342"/>
        <dbReference type="Rhea" id="RHEA-COMP:18582"/>
        <dbReference type="ChEBI" id="CHEBI:15378"/>
        <dbReference type="ChEBI" id="CHEBI:16708"/>
        <dbReference type="ChEBI" id="CHEBI:57844"/>
        <dbReference type="ChEBI" id="CHEBI:59789"/>
        <dbReference type="ChEBI" id="CHEBI:82833"/>
        <dbReference type="ChEBI" id="CHEBI:194443"/>
        <dbReference type="EC" id="2.4.99.17"/>
    </reaction>
</comment>
<comment type="pathway">
    <text evidence="1">tRNA modification; tRNA-queuosine biosynthesis.</text>
</comment>
<comment type="subunit">
    <text evidence="1">Monomer.</text>
</comment>
<comment type="subcellular location">
    <subcellularLocation>
        <location evidence="1">Cytoplasm</location>
    </subcellularLocation>
</comment>
<comment type="similarity">
    <text evidence="1">Belongs to the QueA family.</text>
</comment>
<dbReference type="EC" id="2.4.99.17" evidence="1"/>
<dbReference type="EMBL" id="AP008971">
    <property type="protein sequence ID" value="BAG08232.1"/>
    <property type="molecule type" value="Genomic_DNA"/>
</dbReference>
<dbReference type="RefSeq" id="WP_002838448.1">
    <property type="nucleotide sequence ID" value="NC_010376.1"/>
</dbReference>
<dbReference type="SMR" id="B0S1J2"/>
<dbReference type="STRING" id="334413.FMG_0814"/>
<dbReference type="KEGG" id="fma:FMG_0814"/>
<dbReference type="eggNOG" id="COG0809">
    <property type="taxonomic scope" value="Bacteria"/>
</dbReference>
<dbReference type="HOGENOM" id="CLU_039110_1_0_9"/>
<dbReference type="UniPathway" id="UPA00392"/>
<dbReference type="Proteomes" id="UP000001319">
    <property type="component" value="Chromosome"/>
</dbReference>
<dbReference type="GO" id="GO:0005737">
    <property type="term" value="C:cytoplasm"/>
    <property type="evidence" value="ECO:0007669"/>
    <property type="project" value="UniProtKB-SubCell"/>
</dbReference>
<dbReference type="GO" id="GO:0051075">
    <property type="term" value="F:S-adenosylmethionine:tRNA ribosyltransferase-isomerase activity"/>
    <property type="evidence" value="ECO:0007669"/>
    <property type="project" value="UniProtKB-EC"/>
</dbReference>
<dbReference type="GO" id="GO:0008616">
    <property type="term" value="P:queuosine biosynthetic process"/>
    <property type="evidence" value="ECO:0007669"/>
    <property type="project" value="UniProtKB-UniRule"/>
</dbReference>
<dbReference type="GO" id="GO:0002099">
    <property type="term" value="P:tRNA wobble guanine modification"/>
    <property type="evidence" value="ECO:0007669"/>
    <property type="project" value="TreeGrafter"/>
</dbReference>
<dbReference type="FunFam" id="2.40.10.240:FF:000002">
    <property type="entry name" value="S-adenosylmethionine:tRNA ribosyltransferase-isomerase"/>
    <property type="match status" value="1"/>
</dbReference>
<dbReference type="FunFam" id="3.40.1780.10:FF:000001">
    <property type="entry name" value="S-adenosylmethionine:tRNA ribosyltransferase-isomerase"/>
    <property type="match status" value="1"/>
</dbReference>
<dbReference type="Gene3D" id="2.40.10.240">
    <property type="entry name" value="QueA-like"/>
    <property type="match status" value="1"/>
</dbReference>
<dbReference type="Gene3D" id="3.40.1780.10">
    <property type="entry name" value="QueA-like"/>
    <property type="match status" value="1"/>
</dbReference>
<dbReference type="HAMAP" id="MF_00113">
    <property type="entry name" value="QueA"/>
    <property type="match status" value="1"/>
</dbReference>
<dbReference type="InterPro" id="IPR003699">
    <property type="entry name" value="QueA"/>
</dbReference>
<dbReference type="InterPro" id="IPR042118">
    <property type="entry name" value="QueA_dom1"/>
</dbReference>
<dbReference type="InterPro" id="IPR042119">
    <property type="entry name" value="QueA_dom2"/>
</dbReference>
<dbReference type="InterPro" id="IPR036100">
    <property type="entry name" value="QueA_sf"/>
</dbReference>
<dbReference type="NCBIfam" id="NF001140">
    <property type="entry name" value="PRK00147.1"/>
    <property type="match status" value="1"/>
</dbReference>
<dbReference type="NCBIfam" id="TIGR00113">
    <property type="entry name" value="queA"/>
    <property type="match status" value="1"/>
</dbReference>
<dbReference type="PANTHER" id="PTHR30307">
    <property type="entry name" value="S-ADENOSYLMETHIONINE:TRNA RIBOSYLTRANSFERASE-ISOMERASE"/>
    <property type="match status" value="1"/>
</dbReference>
<dbReference type="PANTHER" id="PTHR30307:SF0">
    <property type="entry name" value="S-ADENOSYLMETHIONINE:TRNA RIBOSYLTRANSFERASE-ISOMERASE"/>
    <property type="match status" value="1"/>
</dbReference>
<dbReference type="Pfam" id="PF02547">
    <property type="entry name" value="Queuosine_synth"/>
    <property type="match status" value="1"/>
</dbReference>
<dbReference type="SUPFAM" id="SSF111337">
    <property type="entry name" value="QueA-like"/>
    <property type="match status" value="1"/>
</dbReference>
<protein>
    <recommendedName>
        <fullName evidence="1">S-adenosylmethionine:tRNA ribosyltransferase-isomerase</fullName>
        <ecNumber evidence="1">2.4.99.17</ecNumber>
    </recommendedName>
    <alternativeName>
        <fullName evidence="1">Queuosine biosynthesis protein QueA</fullName>
    </alternativeName>
</protein>
<reference key="1">
    <citation type="journal article" date="2008" name="DNA Res.">
        <title>Complete genome sequence of Finegoldia magna, an anaerobic opportunistic pathogen.</title>
        <authorList>
            <person name="Goto T."/>
            <person name="Yamashita A."/>
            <person name="Hirakawa H."/>
            <person name="Matsutani M."/>
            <person name="Todo K."/>
            <person name="Ohshima K."/>
            <person name="Toh H."/>
            <person name="Miyamoto K."/>
            <person name="Kuhara S."/>
            <person name="Hattori M."/>
            <person name="Shimizu T."/>
            <person name="Akimoto S."/>
        </authorList>
    </citation>
    <scope>NUCLEOTIDE SEQUENCE [LARGE SCALE GENOMIC DNA]</scope>
    <source>
        <strain>ATCC 29328 / DSM 20472 / WAL 2508</strain>
    </source>
</reference>
<keyword id="KW-0963">Cytoplasm</keyword>
<keyword id="KW-0671">Queuosine biosynthesis</keyword>
<keyword id="KW-1185">Reference proteome</keyword>
<keyword id="KW-0949">S-adenosyl-L-methionine</keyword>
<keyword id="KW-0808">Transferase</keyword>
<accession>B0S1J2</accession>
<evidence type="ECO:0000255" key="1">
    <source>
        <dbReference type="HAMAP-Rule" id="MF_00113"/>
    </source>
</evidence>